<gene>
    <name type="primary">rot1</name>
    <name type="ORF">AN6736</name>
</gene>
<comment type="function">
    <text evidence="1">Required for normal levels of the cell wall 1,6-beta-glucan. Involved in a protein folding machinery chaperoning proteins acting in various physiological processes including cell wall synthesis and lysis of autophagic bodies (By similarity).</text>
</comment>
<comment type="subcellular location">
    <subcellularLocation>
        <location evidence="1">Endoplasmic reticulum membrane</location>
        <topology evidence="1">Single-pass type I membrane protein</topology>
    </subcellularLocation>
</comment>
<comment type="similarity">
    <text evidence="3">Belongs to the ROT1 family.</text>
</comment>
<reference key="1">
    <citation type="journal article" date="2005" name="Nature">
        <title>Sequencing of Aspergillus nidulans and comparative analysis with A. fumigatus and A. oryzae.</title>
        <authorList>
            <person name="Galagan J.E."/>
            <person name="Calvo S.E."/>
            <person name="Cuomo C."/>
            <person name="Ma L.-J."/>
            <person name="Wortman J.R."/>
            <person name="Batzoglou S."/>
            <person name="Lee S.-I."/>
            <person name="Bastuerkmen M."/>
            <person name="Spevak C.C."/>
            <person name="Clutterbuck J."/>
            <person name="Kapitonov V."/>
            <person name="Jurka J."/>
            <person name="Scazzocchio C."/>
            <person name="Farman M.L."/>
            <person name="Butler J."/>
            <person name="Purcell S."/>
            <person name="Harris S."/>
            <person name="Braus G.H."/>
            <person name="Draht O."/>
            <person name="Busch S."/>
            <person name="D'Enfert C."/>
            <person name="Bouchier C."/>
            <person name="Goldman G.H."/>
            <person name="Bell-Pedersen D."/>
            <person name="Griffiths-Jones S."/>
            <person name="Doonan J.H."/>
            <person name="Yu J."/>
            <person name="Vienken K."/>
            <person name="Pain A."/>
            <person name="Freitag M."/>
            <person name="Selker E.U."/>
            <person name="Archer D.B."/>
            <person name="Penalva M.A."/>
            <person name="Oakley B.R."/>
            <person name="Momany M."/>
            <person name="Tanaka T."/>
            <person name="Kumagai T."/>
            <person name="Asai K."/>
            <person name="Machida M."/>
            <person name="Nierman W.C."/>
            <person name="Denning D.W."/>
            <person name="Caddick M.X."/>
            <person name="Hynes M."/>
            <person name="Paoletti M."/>
            <person name="Fischer R."/>
            <person name="Miller B.L."/>
            <person name="Dyer P.S."/>
            <person name="Sachs M.S."/>
            <person name="Osmani S.A."/>
            <person name="Birren B.W."/>
        </authorList>
    </citation>
    <scope>NUCLEOTIDE SEQUENCE [LARGE SCALE GENOMIC DNA]</scope>
    <source>
        <strain>FGSC A4 / ATCC 38163 / CBS 112.46 / NRRL 194 / M139</strain>
    </source>
</reference>
<reference key="2">
    <citation type="journal article" date="2009" name="Fungal Genet. Biol.">
        <title>The 2008 update of the Aspergillus nidulans genome annotation: a community effort.</title>
        <authorList>
            <person name="Wortman J.R."/>
            <person name="Gilsenan J.M."/>
            <person name="Joardar V."/>
            <person name="Deegan J."/>
            <person name="Clutterbuck J."/>
            <person name="Andersen M.R."/>
            <person name="Archer D."/>
            <person name="Bencina M."/>
            <person name="Braus G."/>
            <person name="Coutinho P."/>
            <person name="von Dohren H."/>
            <person name="Doonan J."/>
            <person name="Driessen A.J."/>
            <person name="Durek P."/>
            <person name="Espeso E."/>
            <person name="Fekete E."/>
            <person name="Flipphi M."/>
            <person name="Estrada C.G."/>
            <person name="Geysens S."/>
            <person name="Goldman G."/>
            <person name="de Groot P.W."/>
            <person name="Hansen K."/>
            <person name="Harris S.D."/>
            <person name="Heinekamp T."/>
            <person name="Helmstaedt K."/>
            <person name="Henrissat B."/>
            <person name="Hofmann G."/>
            <person name="Homan T."/>
            <person name="Horio T."/>
            <person name="Horiuchi H."/>
            <person name="James S."/>
            <person name="Jones M."/>
            <person name="Karaffa L."/>
            <person name="Karanyi Z."/>
            <person name="Kato M."/>
            <person name="Keller N."/>
            <person name="Kelly D.E."/>
            <person name="Kiel J.A."/>
            <person name="Kim J.M."/>
            <person name="van der Klei I.J."/>
            <person name="Klis F.M."/>
            <person name="Kovalchuk A."/>
            <person name="Krasevec N."/>
            <person name="Kubicek C.P."/>
            <person name="Liu B."/>
            <person name="Maccabe A."/>
            <person name="Meyer V."/>
            <person name="Mirabito P."/>
            <person name="Miskei M."/>
            <person name="Mos M."/>
            <person name="Mullins J."/>
            <person name="Nelson D.R."/>
            <person name="Nielsen J."/>
            <person name="Oakley B.R."/>
            <person name="Osmani S.A."/>
            <person name="Pakula T."/>
            <person name="Paszewski A."/>
            <person name="Paulsen I."/>
            <person name="Pilsyk S."/>
            <person name="Pocsi I."/>
            <person name="Punt P.J."/>
            <person name="Ram A.F."/>
            <person name="Ren Q."/>
            <person name="Robellet X."/>
            <person name="Robson G."/>
            <person name="Seiboth B."/>
            <person name="van Solingen P."/>
            <person name="Specht T."/>
            <person name="Sun J."/>
            <person name="Taheri-Talesh N."/>
            <person name="Takeshita N."/>
            <person name="Ussery D."/>
            <person name="vanKuyk P.A."/>
            <person name="Visser H."/>
            <person name="van de Vondervoort P.J."/>
            <person name="de Vries R.P."/>
            <person name="Walton J."/>
            <person name="Xiang X."/>
            <person name="Xiong Y."/>
            <person name="Zeng A.P."/>
            <person name="Brandt B.W."/>
            <person name="Cornell M.J."/>
            <person name="van den Hondel C.A."/>
            <person name="Visser J."/>
            <person name="Oliver S.G."/>
            <person name="Turner G."/>
        </authorList>
    </citation>
    <scope>GENOME REANNOTATION</scope>
    <source>
        <strain>FGSC A4 / ATCC 38163 / CBS 112.46 / NRRL 194 / M139</strain>
    </source>
</reference>
<organism>
    <name type="scientific">Emericella nidulans (strain FGSC A4 / ATCC 38163 / CBS 112.46 / NRRL 194 / M139)</name>
    <name type="common">Aspergillus nidulans</name>
    <dbReference type="NCBI Taxonomy" id="227321"/>
    <lineage>
        <taxon>Eukaryota</taxon>
        <taxon>Fungi</taxon>
        <taxon>Dikarya</taxon>
        <taxon>Ascomycota</taxon>
        <taxon>Pezizomycotina</taxon>
        <taxon>Eurotiomycetes</taxon>
        <taxon>Eurotiomycetidae</taxon>
        <taxon>Eurotiales</taxon>
        <taxon>Aspergillaceae</taxon>
        <taxon>Aspergillus</taxon>
        <taxon>Aspergillus subgen. Nidulantes</taxon>
    </lineage>
</organism>
<dbReference type="EMBL" id="AACD01000112">
    <property type="protein sequence ID" value="EAA58554.1"/>
    <property type="molecule type" value="Genomic_DNA"/>
</dbReference>
<dbReference type="EMBL" id="BN001301">
    <property type="protein sequence ID" value="CBF71357.1"/>
    <property type="molecule type" value="Genomic_DNA"/>
</dbReference>
<dbReference type="RefSeq" id="XP_664340.1">
    <property type="nucleotide sequence ID" value="XM_659248.1"/>
</dbReference>
<dbReference type="FunCoup" id="Q5AY94">
    <property type="interactions" value="19"/>
</dbReference>
<dbReference type="STRING" id="227321.Q5AY94"/>
<dbReference type="GlyCosmos" id="Q5AY94">
    <property type="glycosylation" value="1 site, No reported glycans"/>
</dbReference>
<dbReference type="EnsemblFungi" id="CBF71357">
    <property type="protein sequence ID" value="CBF71357"/>
    <property type="gene ID" value="ANIA_06736"/>
</dbReference>
<dbReference type="KEGG" id="ani:ANIA_06736"/>
<dbReference type="VEuPathDB" id="FungiDB:AN6736"/>
<dbReference type="eggNOG" id="ENOG502QQTG">
    <property type="taxonomic scope" value="Eukaryota"/>
</dbReference>
<dbReference type="HOGENOM" id="CLU_071622_0_0_1"/>
<dbReference type="InParanoid" id="Q5AY94"/>
<dbReference type="OMA" id="YKPPQML"/>
<dbReference type="OrthoDB" id="5327821at2759"/>
<dbReference type="Proteomes" id="UP000000560">
    <property type="component" value="Chromosome I"/>
</dbReference>
<dbReference type="GO" id="GO:0005789">
    <property type="term" value="C:endoplasmic reticulum membrane"/>
    <property type="evidence" value="ECO:0000318"/>
    <property type="project" value="GO_Central"/>
</dbReference>
<dbReference type="GO" id="GO:0051082">
    <property type="term" value="F:unfolded protein binding"/>
    <property type="evidence" value="ECO:0000318"/>
    <property type="project" value="GO_Central"/>
</dbReference>
<dbReference type="GO" id="GO:0006458">
    <property type="term" value="P:'de novo' protein folding"/>
    <property type="evidence" value="ECO:0000318"/>
    <property type="project" value="GO_Central"/>
</dbReference>
<dbReference type="InterPro" id="IPR019623">
    <property type="entry name" value="Rot1"/>
</dbReference>
<dbReference type="PANTHER" id="PTHR28090">
    <property type="entry name" value="PROTEIN ROT1"/>
    <property type="match status" value="1"/>
</dbReference>
<dbReference type="PANTHER" id="PTHR28090:SF1">
    <property type="entry name" value="PROTEIN ROT1"/>
    <property type="match status" value="1"/>
</dbReference>
<dbReference type="Pfam" id="PF10681">
    <property type="entry name" value="Rot1"/>
    <property type="match status" value="1"/>
</dbReference>
<dbReference type="PIRSF" id="PIRSF017290">
    <property type="entry name" value="ROT1_prd"/>
    <property type="match status" value="1"/>
</dbReference>
<protein>
    <recommendedName>
        <fullName>Protein rot1</fullName>
    </recommendedName>
</protein>
<feature type="signal peptide" evidence="2">
    <location>
        <begin position="1"/>
        <end position="17"/>
    </location>
</feature>
<feature type="chain" id="PRO_0000333411" description="Protein rot1">
    <location>
        <begin position="18"/>
        <end position="234"/>
    </location>
</feature>
<feature type="topological domain" description="Lumenal" evidence="2">
    <location>
        <begin position="18"/>
        <end position="215"/>
    </location>
</feature>
<feature type="transmembrane region" description="Helical" evidence="2">
    <location>
        <begin position="216"/>
        <end position="233"/>
    </location>
</feature>
<feature type="topological domain" description="Cytoplasmic" evidence="2">
    <location>
        <position position="234"/>
    </location>
</feature>
<feature type="glycosylation site" description="N-linked (GlcNAc...) asparagine" evidence="2">
    <location>
        <position position="130"/>
    </location>
</feature>
<sequence length="234" mass="26278">MLVIYFIGSLLASLVSARNAADLIGTWTTKSRQVFTGPGFYDVVKDELIEPRLTGISFSFTEDGHFEEAFYRAVSNPQDPSCPKGILQWQHGTYTVDSDGSIHLNPIAEDGRQLLSDPCSSSKGIYTRYNQTEKYSSFTVDVDPYYDSIRLNLYSFDGSPMIPMYLAYRPPEMLPTGPLQSIVSKKAKRHFDSKKVTPFGLRTLISKDNLVDPNRWLWVGIVMSAMGGITLFFT</sequence>
<proteinExistence type="inferred from homology"/>
<name>ROT1_EMENI</name>
<accession>Q5AY94</accession>
<accession>C8V1X6</accession>
<keyword id="KW-0256">Endoplasmic reticulum</keyword>
<keyword id="KW-0325">Glycoprotein</keyword>
<keyword id="KW-0472">Membrane</keyword>
<keyword id="KW-1185">Reference proteome</keyword>
<keyword id="KW-0732">Signal</keyword>
<keyword id="KW-0812">Transmembrane</keyword>
<keyword id="KW-1133">Transmembrane helix</keyword>
<evidence type="ECO:0000250" key="1"/>
<evidence type="ECO:0000255" key="2"/>
<evidence type="ECO:0000305" key="3"/>